<evidence type="ECO:0000255" key="1">
    <source>
        <dbReference type="HAMAP-Rule" id="MF_00227"/>
    </source>
</evidence>
<protein>
    <recommendedName>
        <fullName evidence="1">Ribonuclease P protein component</fullName>
        <shortName evidence="1">RNase P protein</shortName>
        <shortName evidence="1">RNaseP protein</shortName>
        <ecNumber evidence="1">3.1.26.5</ecNumber>
    </recommendedName>
    <alternativeName>
        <fullName evidence="1">Protein C5</fullName>
    </alternativeName>
</protein>
<name>RNPA_CHLTR</name>
<sequence>MSRLTLPKNARLLKRKQFVYVQRNGRCCRADQVTLRVVPSRHSNTRKVGITVSKKFGKAHQRNRFKRIVREAFRHVRPNLPGCQVVISPRGNSQPDFLKLSEELLQRIPEALPLASSSRC</sequence>
<dbReference type="EC" id="3.1.26.5" evidence="1"/>
<dbReference type="EMBL" id="AE001273">
    <property type="protein sequence ID" value="AAC68379.1"/>
    <property type="molecule type" value="Genomic_DNA"/>
</dbReference>
<dbReference type="PIR" id="D71470">
    <property type="entry name" value="D71470"/>
</dbReference>
<dbReference type="RefSeq" id="NP_220303.1">
    <property type="nucleotide sequence ID" value="NC_000117.1"/>
</dbReference>
<dbReference type="RefSeq" id="WP_009872165.1">
    <property type="nucleotide sequence ID" value="NC_000117.1"/>
</dbReference>
<dbReference type="SMR" id="O84789"/>
<dbReference type="FunCoup" id="O84789">
    <property type="interactions" value="140"/>
</dbReference>
<dbReference type="STRING" id="272561.CT_784"/>
<dbReference type="EnsemblBacteria" id="AAC68379">
    <property type="protein sequence ID" value="AAC68379"/>
    <property type="gene ID" value="CT_784"/>
</dbReference>
<dbReference type="GeneID" id="884581"/>
<dbReference type="KEGG" id="ctr:CT_784"/>
<dbReference type="PATRIC" id="fig|272561.5.peg.861"/>
<dbReference type="HOGENOM" id="CLU_117179_9_2_0"/>
<dbReference type="InParanoid" id="O84789"/>
<dbReference type="OrthoDB" id="9810867at2"/>
<dbReference type="Proteomes" id="UP000000431">
    <property type="component" value="Chromosome"/>
</dbReference>
<dbReference type="GO" id="GO:0030677">
    <property type="term" value="C:ribonuclease P complex"/>
    <property type="evidence" value="ECO:0000318"/>
    <property type="project" value="GO_Central"/>
</dbReference>
<dbReference type="GO" id="GO:0042781">
    <property type="term" value="F:3'-tRNA processing endoribonuclease activity"/>
    <property type="evidence" value="ECO:0000318"/>
    <property type="project" value="GO_Central"/>
</dbReference>
<dbReference type="GO" id="GO:0004526">
    <property type="term" value="F:ribonuclease P activity"/>
    <property type="evidence" value="ECO:0000318"/>
    <property type="project" value="GO_Central"/>
</dbReference>
<dbReference type="GO" id="GO:0000049">
    <property type="term" value="F:tRNA binding"/>
    <property type="evidence" value="ECO:0007669"/>
    <property type="project" value="UniProtKB-UniRule"/>
</dbReference>
<dbReference type="GO" id="GO:0042780">
    <property type="term" value="P:tRNA 3'-end processing"/>
    <property type="evidence" value="ECO:0000318"/>
    <property type="project" value="GO_Central"/>
</dbReference>
<dbReference type="GO" id="GO:0001682">
    <property type="term" value="P:tRNA 5'-leader removal"/>
    <property type="evidence" value="ECO:0007669"/>
    <property type="project" value="UniProtKB-UniRule"/>
</dbReference>
<dbReference type="FunFam" id="3.30.230.10:FF:000142">
    <property type="entry name" value="Ribonuclease P protein component"/>
    <property type="match status" value="1"/>
</dbReference>
<dbReference type="Gene3D" id="3.30.230.10">
    <property type="match status" value="1"/>
</dbReference>
<dbReference type="HAMAP" id="MF_00227">
    <property type="entry name" value="RNase_P"/>
    <property type="match status" value="1"/>
</dbReference>
<dbReference type="InterPro" id="IPR020568">
    <property type="entry name" value="Ribosomal_Su5_D2-typ_SF"/>
</dbReference>
<dbReference type="InterPro" id="IPR014721">
    <property type="entry name" value="Ribsml_uS5_D2-typ_fold_subgr"/>
</dbReference>
<dbReference type="InterPro" id="IPR000100">
    <property type="entry name" value="RNase_P"/>
</dbReference>
<dbReference type="InterPro" id="IPR020539">
    <property type="entry name" value="RNase_P_CS"/>
</dbReference>
<dbReference type="NCBIfam" id="TIGR00188">
    <property type="entry name" value="rnpA"/>
    <property type="match status" value="1"/>
</dbReference>
<dbReference type="PANTHER" id="PTHR33992">
    <property type="entry name" value="RIBONUCLEASE P PROTEIN COMPONENT"/>
    <property type="match status" value="1"/>
</dbReference>
<dbReference type="PANTHER" id="PTHR33992:SF1">
    <property type="entry name" value="RIBONUCLEASE P PROTEIN COMPONENT"/>
    <property type="match status" value="1"/>
</dbReference>
<dbReference type="Pfam" id="PF00825">
    <property type="entry name" value="Ribonuclease_P"/>
    <property type="match status" value="1"/>
</dbReference>
<dbReference type="SUPFAM" id="SSF54211">
    <property type="entry name" value="Ribosomal protein S5 domain 2-like"/>
    <property type="match status" value="1"/>
</dbReference>
<dbReference type="PROSITE" id="PS00648">
    <property type="entry name" value="RIBONUCLEASE_P"/>
    <property type="match status" value="1"/>
</dbReference>
<keyword id="KW-0255">Endonuclease</keyword>
<keyword id="KW-0378">Hydrolase</keyword>
<keyword id="KW-0540">Nuclease</keyword>
<keyword id="KW-1185">Reference proteome</keyword>
<keyword id="KW-0694">RNA-binding</keyword>
<keyword id="KW-0819">tRNA processing</keyword>
<reference key="1">
    <citation type="journal article" date="1998" name="Science">
        <title>Genome sequence of an obligate intracellular pathogen of humans: Chlamydia trachomatis.</title>
        <authorList>
            <person name="Stephens R.S."/>
            <person name="Kalman S."/>
            <person name="Lammel C.J."/>
            <person name="Fan J."/>
            <person name="Marathe R."/>
            <person name="Aravind L."/>
            <person name="Mitchell W.P."/>
            <person name="Olinger L."/>
            <person name="Tatusov R.L."/>
            <person name="Zhao Q."/>
            <person name="Koonin E.V."/>
            <person name="Davis R.W."/>
        </authorList>
    </citation>
    <scope>NUCLEOTIDE SEQUENCE [LARGE SCALE GENOMIC DNA]</scope>
    <source>
        <strain>ATCC VR-885 / DSM 19411 / UW-3/Cx</strain>
    </source>
</reference>
<accession>O84789</accession>
<feature type="chain" id="PRO_0000198448" description="Ribonuclease P protein component">
    <location>
        <begin position="1"/>
        <end position="120"/>
    </location>
</feature>
<comment type="function">
    <text evidence="1">RNaseP catalyzes the removal of the 5'-leader sequence from pre-tRNA to produce the mature 5'-terminus. It can also cleave other RNA substrates such as 4.5S RNA. The protein component plays an auxiliary but essential role in vivo by binding to the 5'-leader sequence and broadening the substrate specificity of the ribozyme.</text>
</comment>
<comment type="catalytic activity">
    <reaction evidence="1">
        <text>Endonucleolytic cleavage of RNA, removing 5'-extranucleotides from tRNA precursor.</text>
        <dbReference type="EC" id="3.1.26.5"/>
    </reaction>
</comment>
<comment type="subunit">
    <text evidence="1">Consists of a catalytic RNA component (M1 or rnpB) and a protein subunit.</text>
</comment>
<comment type="similarity">
    <text evidence="1">Belongs to the RnpA family.</text>
</comment>
<proteinExistence type="inferred from homology"/>
<gene>
    <name evidence="1" type="primary">rnpA</name>
    <name type="ordered locus">CT_784</name>
</gene>
<organism>
    <name type="scientific">Chlamydia trachomatis serovar D (strain ATCC VR-885 / DSM 19411 / UW-3/Cx)</name>
    <dbReference type="NCBI Taxonomy" id="272561"/>
    <lineage>
        <taxon>Bacteria</taxon>
        <taxon>Pseudomonadati</taxon>
        <taxon>Chlamydiota</taxon>
        <taxon>Chlamydiia</taxon>
        <taxon>Chlamydiales</taxon>
        <taxon>Chlamydiaceae</taxon>
        <taxon>Chlamydia/Chlamydophila group</taxon>
        <taxon>Chlamydia</taxon>
    </lineage>
</organism>